<name>INH1_TABYA</name>
<feature type="signal peptide" evidence="6">
    <location>
        <begin position="1"/>
        <end position="23"/>
    </location>
</feature>
<feature type="chain" id="PRO_5002908920" description="Tabinhibitin 1" evidence="6">
    <location>
        <begin position="24"/>
        <end position="255"/>
    </location>
</feature>
<feature type="domain" description="SCP" evidence="2">
    <location>
        <begin position="67"/>
        <end position="211"/>
    </location>
</feature>
<feature type="sequence conflict" description="In Ref. 1." evidence="5" ref="1">
    <location>
        <begin position="76"/>
        <end position="77"/>
    </location>
</feature>
<feature type="sequence conflict" description="In Ref. 1." evidence="5" ref="1">
    <original>L</original>
    <variation>LHV</variation>
    <location>
        <position position="154"/>
    </location>
</feature>
<organism>
    <name type="scientific">Tabanus yao</name>
    <name type="common">Horsefly</name>
    <dbReference type="NCBI Taxonomy" id="485572"/>
    <lineage>
        <taxon>Eukaryota</taxon>
        <taxon>Metazoa</taxon>
        <taxon>Ecdysozoa</taxon>
        <taxon>Arthropoda</taxon>
        <taxon>Hexapoda</taxon>
        <taxon>Insecta</taxon>
        <taxon>Pterygota</taxon>
        <taxon>Neoptera</taxon>
        <taxon>Endopterygota</taxon>
        <taxon>Diptera</taxon>
        <taxon>Brachycera</taxon>
        <taxon>Tabanomorpha</taxon>
        <taxon>Tabanoidea</taxon>
        <taxon>Tabanidae</taxon>
        <taxon>Tabanus</taxon>
    </lineage>
</organism>
<reference evidence="7" key="1">
    <citation type="journal article" date="2008" name="Mol. Cell. Proteomics">
        <title>Toward an understanding of the molecular mechanism for successful blood feeding by coupling proteomics analysis with pharmacological testing of horsefly salivary glands.</title>
        <authorList>
            <person name="Xu X."/>
            <person name="Yang H."/>
            <person name="Ma D."/>
            <person name="Wu J."/>
            <person name="Wang Y."/>
            <person name="Song Y."/>
            <person name="Wang X."/>
            <person name="Lu Y."/>
            <person name="Yang J."/>
            <person name="Lai R."/>
        </authorList>
    </citation>
    <scope>NUCLEOTIDE SEQUENCE [MRNA]</scope>
    <scope>PROTEIN SEQUENCE OF 24-48; 88-102 AND 187-202</scope>
    <scope>SUBCELLULAR LOCATION</scope>
    <scope>FUNCTION</scope>
    <source>
        <tissue>Salivary gland</tissue>
    </source>
</reference>
<accession>C1IBY2</accession>
<proteinExistence type="evidence at protein level"/>
<dbReference type="EMBL" id="EU147252">
    <property type="protein sequence ID" value="ABX80070.1"/>
    <property type="molecule type" value="mRNA"/>
</dbReference>
<dbReference type="SMR" id="C1IBY2"/>
<dbReference type="GO" id="GO:0005576">
    <property type="term" value="C:extracellular region"/>
    <property type="evidence" value="ECO:0007669"/>
    <property type="project" value="UniProtKB-SubCell"/>
</dbReference>
<dbReference type="GO" id="GO:0090729">
    <property type="term" value="F:toxin activity"/>
    <property type="evidence" value="ECO:0007669"/>
    <property type="project" value="UniProtKB-KW"/>
</dbReference>
<dbReference type="CDD" id="cd05380">
    <property type="entry name" value="CAP_euk"/>
    <property type="match status" value="1"/>
</dbReference>
<dbReference type="Gene3D" id="3.40.33.10">
    <property type="entry name" value="CAP"/>
    <property type="match status" value="1"/>
</dbReference>
<dbReference type="InterPro" id="IPR014044">
    <property type="entry name" value="CAP_dom"/>
</dbReference>
<dbReference type="InterPro" id="IPR035940">
    <property type="entry name" value="CAP_sf"/>
</dbReference>
<dbReference type="InterPro" id="IPR034763">
    <property type="entry name" value="P14a_insect"/>
</dbReference>
<dbReference type="Pfam" id="PF00188">
    <property type="entry name" value="CAP"/>
    <property type="match status" value="1"/>
</dbReference>
<dbReference type="PIRSF" id="PIRSF038921">
    <property type="entry name" value="P14a"/>
    <property type="match status" value="1"/>
</dbReference>
<dbReference type="SMART" id="SM00198">
    <property type="entry name" value="SCP"/>
    <property type="match status" value="1"/>
</dbReference>
<dbReference type="SUPFAM" id="SSF55797">
    <property type="entry name" value="PR-1-like"/>
    <property type="match status" value="1"/>
</dbReference>
<comment type="function">
    <text evidence="1">Inhibits platelet aggregation induced by all agonists tested (By similarity). May act by competing with fibrinogen for binding to glycoprotein IIb/IIIa (ITGA2B/ITGB3) (By similarity).</text>
</comment>
<comment type="subcellular location">
    <subcellularLocation>
        <location evidence="3">Secreted</location>
    </subcellularLocation>
</comment>
<comment type="tissue specificity">
    <text evidence="6">Expressed in salivary glands.</text>
</comment>
<comment type="similarity">
    <text evidence="5">Belongs to the CRISP family.</text>
</comment>
<evidence type="ECO:0000250" key="1">
    <source>
        <dbReference type="UniProtKB" id="C1IBY3"/>
    </source>
</evidence>
<evidence type="ECO:0000255" key="2"/>
<evidence type="ECO:0000269" key="3">
    <source>
    </source>
</evidence>
<evidence type="ECO:0000303" key="4">
    <source>
    </source>
</evidence>
<evidence type="ECO:0000305" key="5"/>
<evidence type="ECO:0000305" key="6">
    <source>
    </source>
</evidence>
<evidence type="ECO:0000312" key="7">
    <source>
        <dbReference type="EMBL" id="ABX80070.1"/>
    </source>
</evidence>
<sequence>MTSILVSRFLIAALVLQYATSDAVNYCRLPCRGCDYHVGCGEPAYAQECGQSPRTRELLKEHRNEILSKINDVRDHVAKGSWGLPMAARMKVVVWDAELAGLAKRHTKGCVGETHACRNTERFWLPGQLNFKYSGDKLPRIRELIDDAVKKGHLQKHNITREFIENYRENGPNGNVKGLALAISDRVTAVGCGLTTWEDGAKARALLTCNFSSQNIRGRPVYKIGNSPGEKCIEKDETYKNLCSATEPIDPNKSN</sequence>
<keyword id="KW-1217">Cell adhesion impairing toxin</keyword>
<keyword id="KW-0903">Direct protein sequencing</keyword>
<keyword id="KW-1199">Hemostasis impairing toxin</keyword>
<keyword id="KW-1201">Platelet aggregation inhibiting toxin</keyword>
<keyword id="KW-0964">Secreted</keyword>
<keyword id="KW-0732">Signal</keyword>
<keyword id="KW-0800">Toxin</keyword>
<protein>
    <recommendedName>
        <fullName evidence="4">Tabinhibitin 1</fullName>
    </recommendedName>
    <alternativeName>
        <fullName evidence="7">Macquaritin 1</fullName>
    </alternativeName>
</protein>